<proteinExistence type="evidence at protein level"/>
<keyword id="KW-0010">Activator</keyword>
<keyword id="KW-0963">Cytoplasm</keyword>
<keyword id="KW-0238">DNA-binding</keyword>
<keyword id="KW-0678">Repressor</keyword>
<keyword id="KW-0804">Transcription</keyword>
<keyword id="KW-0805">Transcription regulation</keyword>
<keyword id="KW-0843">Virulence</keyword>
<comment type="function">
    <text evidence="1">Regulatory protein involved in autolytic activity, multidrug resistance and virulence.</text>
</comment>
<comment type="subcellular location">
    <subcellularLocation>
        <location evidence="3">Cytoplasm</location>
    </subcellularLocation>
</comment>
<accession>Q7A6X2</accession>
<sequence length="147" mass="17089">MSDQHNLKEQLCFSLYNAQRQVNRYYSNKVFKKYNLTYPQFLVLTILWDESPVNVKKVVTELALDTGTVSPLLKRMEQVDLIKRERSEVDQREVFIHLTDKSETIRPELSNASDKVASASSLSQDEVKELNRLLGKVIHAFDETKEK</sequence>
<gene>
    <name type="primary">mgrA</name>
    <name type="synonym">norR</name>
    <name type="ordered locus">SA0641</name>
</gene>
<reference key="1">
    <citation type="journal article" date="2001" name="Lancet">
        <title>Whole genome sequencing of meticillin-resistant Staphylococcus aureus.</title>
        <authorList>
            <person name="Kuroda M."/>
            <person name="Ohta T."/>
            <person name="Uchiyama I."/>
            <person name="Baba T."/>
            <person name="Yuzawa H."/>
            <person name="Kobayashi I."/>
            <person name="Cui L."/>
            <person name="Oguchi A."/>
            <person name="Aoki K."/>
            <person name="Nagai Y."/>
            <person name="Lian J.-Q."/>
            <person name="Ito T."/>
            <person name="Kanamori M."/>
            <person name="Matsumaru H."/>
            <person name="Maruyama A."/>
            <person name="Murakami H."/>
            <person name="Hosoyama A."/>
            <person name="Mizutani-Ui Y."/>
            <person name="Takahashi N.K."/>
            <person name="Sawano T."/>
            <person name="Inoue R."/>
            <person name="Kaito C."/>
            <person name="Sekimizu K."/>
            <person name="Hirakawa H."/>
            <person name="Kuhara S."/>
            <person name="Goto S."/>
            <person name="Yabuzaki J."/>
            <person name="Kanehisa M."/>
            <person name="Yamashita A."/>
            <person name="Oshima K."/>
            <person name="Furuya K."/>
            <person name="Yoshino C."/>
            <person name="Shiba T."/>
            <person name="Hattori M."/>
            <person name="Ogasawara N."/>
            <person name="Hayashi H."/>
            <person name="Hiramatsu K."/>
        </authorList>
    </citation>
    <scope>NUCLEOTIDE SEQUENCE [LARGE SCALE GENOMIC DNA]</scope>
    <source>
        <strain>N315</strain>
    </source>
</reference>
<reference key="2">
    <citation type="submission" date="2007-10" db="UniProtKB">
        <title>Shotgun proteomic analysis of total and membrane protein extracts of S. aureus strain N315.</title>
        <authorList>
            <person name="Vaezzadeh A.R."/>
            <person name="Deshusses J."/>
            <person name="Lescuyer P."/>
            <person name="Hochstrasser D.F."/>
        </authorList>
    </citation>
    <scope>IDENTIFICATION BY MASS SPECTROMETRY [LARGE SCALE ANALYSIS]</scope>
    <source>
        <strain>N315</strain>
    </source>
</reference>
<name>MGRA_STAAN</name>
<organism>
    <name type="scientific">Staphylococcus aureus (strain N315)</name>
    <dbReference type="NCBI Taxonomy" id="158879"/>
    <lineage>
        <taxon>Bacteria</taxon>
        <taxon>Bacillati</taxon>
        <taxon>Bacillota</taxon>
        <taxon>Bacilli</taxon>
        <taxon>Bacillales</taxon>
        <taxon>Staphylococcaceae</taxon>
        <taxon>Staphylococcus</taxon>
    </lineage>
</organism>
<evidence type="ECO:0000250" key="1"/>
<evidence type="ECO:0000255" key="2">
    <source>
        <dbReference type="PROSITE-ProRule" id="PRU00345"/>
    </source>
</evidence>
<evidence type="ECO:0000305" key="3"/>
<feature type="initiator methionine" description="Removed" evidence="1">
    <location>
        <position position="1"/>
    </location>
</feature>
<feature type="chain" id="PRO_0000054369" description="HTH-type transcriptional regulator MgrA">
    <location>
        <begin position="2"/>
        <end position="147"/>
    </location>
</feature>
<feature type="domain" description="HTH marR-type" evidence="2">
    <location>
        <begin position="8"/>
        <end position="139"/>
    </location>
</feature>
<feature type="DNA-binding region" description="H-T-H motif" evidence="2">
    <location>
        <begin position="55"/>
        <end position="78"/>
    </location>
</feature>
<protein>
    <recommendedName>
        <fullName>HTH-type transcriptional regulator MgrA</fullName>
    </recommendedName>
</protein>
<dbReference type="EMBL" id="BA000018">
    <property type="protein sequence ID" value="BAB41874.1"/>
    <property type="molecule type" value="Genomic_DNA"/>
</dbReference>
<dbReference type="PIR" id="G89839">
    <property type="entry name" value="G89839"/>
</dbReference>
<dbReference type="RefSeq" id="WP_001283444.1">
    <property type="nucleotide sequence ID" value="NC_002745.2"/>
</dbReference>
<dbReference type="SMR" id="Q7A6X2"/>
<dbReference type="EnsemblBacteria" id="BAB41874">
    <property type="protein sequence ID" value="BAB41874"/>
    <property type="gene ID" value="BAB41874"/>
</dbReference>
<dbReference type="GeneID" id="98345028"/>
<dbReference type="KEGG" id="sau:SA0641"/>
<dbReference type="HOGENOM" id="CLU_083287_3_2_9"/>
<dbReference type="GO" id="GO:0005737">
    <property type="term" value="C:cytoplasm"/>
    <property type="evidence" value="ECO:0007669"/>
    <property type="project" value="UniProtKB-SubCell"/>
</dbReference>
<dbReference type="GO" id="GO:0003677">
    <property type="term" value="F:DNA binding"/>
    <property type="evidence" value="ECO:0007669"/>
    <property type="project" value="UniProtKB-KW"/>
</dbReference>
<dbReference type="GO" id="GO:0003700">
    <property type="term" value="F:DNA-binding transcription factor activity"/>
    <property type="evidence" value="ECO:0007669"/>
    <property type="project" value="InterPro"/>
</dbReference>
<dbReference type="GO" id="GO:0006950">
    <property type="term" value="P:response to stress"/>
    <property type="evidence" value="ECO:0007669"/>
    <property type="project" value="TreeGrafter"/>
</dbReference>
<dbReference type="FunFam" id="1.10.10.10:FF:000163">
    <property type="entry name" value="MarR family transcriptional regulator"/>
    <property type="match status" value="1"/>
</dbReference>
<dbReference type="Gene3D" id="1.10.10.10">
    <property type="entry name" value="Winged helix-like DNA-binding domain superfamily/Winged helix DNA-binding domain"/>
    <property type="match status" value="1"/>
</dbReference>
<dbReference type="InterPro" id="IPR000835">
    <property type="entry name" value="HTH_MarR-typ"/>
</dbReference>
<dbReference type="InterPro" id="IPR039422">
    <property type="entry name" value="MarR/SlyA-like"/>
</dbReference>
<dbReference type="InterPro" id="IPR055166">
    <property type="entry name" value="Transc_reg_Sar_Rot_HTH"/>
</dbReference>
<dbReference type="InterPro" id="IPR023187">
    <property type="entry name" value="Tscrpt_reg_MarR-type_CS"/>
</dbReference>
<dbReference type="InterPro" id="IPR036388">
    <property type="entry name" value="WH-like_DNA-bd_sf"/>
</dbReference>
<dbReference type="InterPro" id="IPR036390">
    <property type="entry name" value="WH_DNA-bd_sf"/>
</dbReference>
<dbReference type="PANTHER" id="PTHR33164:SF5">
    <property type="entry name" value="ORGANIC HYDROPEROXIDE RESISTANCE TRANSCRIPTIONAL REGULATOR"/>
    <property type="match status" value="1"/>
</dbReference>
<dbReference type="PANTHER" id="PTHR33164">
    <property type="entry name" value="TRANSCRIPTIONAL REGULATOR, MARR FAMILY"/>
    <property type="match status" value="1"/>
</dbReference>
<dbReference type="Pfam" id="PF22381">
    <property type="entry name" value="Staph_reg_Sar_Rot"/>
    <property type="match status" value="1"/>
</dbReference>
<dbReference type="SMART" id="SM00347">
    <property type="entry name" value="HTH_MARR"/>
    <property type="match status" value="1"/>
</dbReference>
<dbReference type="SUPFAM" id="SSF46785">
    <property type="entry name" value="Winged helix' DNA-binding domain"/>
    <property type="match status" value="1"/>
</dbReference>
<dbReference type="PROSITE" id="PS01117">
    <property type="entry name" value="HTH_MARR_1"/>
    <property type="match status" value="1"/>
</dbReference>
<dbReference type="PROSITE" id="PS50995">
    <property type="entry name" value="HTH_MARR_2"/>
    <property type="match status" value="1"/>
</dbReference>